<evidence type="ECO:0000255" key="1">
    <source>
        <dbReference type="HAMAP-Rule" id="MF_00435"/>
    </source>
</evidence>
<evidence type="ECO:0000255" key="2">
    <source>
        <dbReference type="PROSITE-ProRule" id="PRU01197"/>
    </source>
</evidence>
<evidence type="ECO:0000255" key="3">
    <source>
        <dbReference type="PROSITE-ProRule" id="PRU01198"/>
    </source>
</evidence>
<protein>
    <recommendedName>
        <fullName evidence="1">Ketol-acid reductoisomerase (NADP(+))</fullName>
        <shortName evidence="1">KARI</shortName>
        <ecNumber evidence="1">1.1.1.86</ecNumber>
    </recommendedName>
    <alternativeName>
        <fullName evidence="1">Acetohydroxy-acid isomeroreductase</fullName>
        <shortName evidence="1">AHIR</shortName>
    </alternativeName>
    <alternativeName>
        <fullName evidence="1">Alpha-keto-beta-hydroxylacyl reductoisomerase</fullName>
    </alternativeName>
    <alternativeName>
        <fullName evidence="1">Ketol-acid reductoisomerase type 2</fullName>
    </alternativeName>
    <alternativeName>
        <fullName evidence="1">Ketol-acid reductoisomerase type II</fullName>
    </alternativeName>
</protein>
<feature type="chain" id="PRO_0000151335" description="Ketol-acid reductoisomerase (NADP(+))">
    <location>
        <begin position="1"/>
        <end position="491"/>
    </location>
</feature>
<feature type="domain" description="KARI N-terminal Rossmann" evidence="2">
    <location>
        <begin position="14"/>
        <end position="208"/>
    </location>
</feature>
<feature type="domain" description="KARI C-terminal knotted 1" evidence="3">
    <location>
        <begin position="209"/>
        <end position="344"/>
    </location>
</feature>
<feature type="domain" description="KARI C-terminal knotted 2" evidence="3">
    <location>
        <begin position="345"/>
        <end position="485"/>
    </location>
</feature>
<feature type="active site" evidence="1">
    <location>
        <position position="132"/>
    </location>
</feature>
<feature type="binding site" evidence="1">
    <location>
        <begin position="45"/>
        <end position="48"/>
    </location>
    <ligand>
        <name>NADP(+)</name>
        <dbReference type="ChEBI" id="CHEBI:58349"/>
    </ligand>
</feature>
<feature type="binding site" evidence="1">
    <location>
        <position position="68"/>
    </location>
    <ligand>
        <name>NADP(+)</name>
        <dbReference type="ChEBI" id="CHEBI:58349"/>
    </ligand>
</feature>
<feature type="binding site" evidence="1">
    <location>
        <position position="76"/>
    </location>
    <ligand>
        <name>NADP(+)</name>
        <dbReference type="ChEBI" id="CHEBI:58349"/>
    </ligand>
</feature>
<feature type="binding site" evidence="1">
    <location>
        <position position="78"/>
    </location>
    <ligand>
        <name>NADP(+)</name>
        <dbReference type="ChEBI" id="CHEBI:58349"/>
    </ligand>
</feature>
<feature type="binding site" evidence="1">
    <location>
        <begin position="108"/>
        <end position="110"/>
    </location>
    <ligand>
        <name>NADP(+)</name>
        <dbReference type="ChEBI" id="CHEBI:58349"/>
    </ligand>
</feature>
<feature type="binding site" evidence="1">
    <location>
        <position position="158"/>
    </location>
    <ligand>
        <name>NADP(+)</name>
        <dbReference type="ChEBI" id="CHEBI:58349"/>
    </ligand>
</feature>
<feature type="binding site" evidence="1">
    <location>
        <position position="217"/>
    </location>
    <ligand>
        <name>Mg(2+)</name>
        <dbReference type="ChEBI" id="CHEBI:18420"/>
        <label>1</label>
    </ligand>
</feature>
<feature type="binding site" evidence="1">
    <location>
        <position position="217"/>
    </location>
    <ligand>
        <name>Mg(2+)</name>
        <dbReference type="ChEBI" id="CHEBI:18420"/>
        <label>2</label>
    </ligand>
</feature>
<feature type="binding site" evidence="1">
    <location>
        <position position="221"/>
    </location>
    <ligand>
        <name>Mg(2+)</name>
        <dbReference type="ChEBI" id="CHEBI:18420"/>
        <label>1</label>
    </ligand>
</feature>
<feature type="binding site" evidence="1">
    <location>
        <position position="389"/>
    </location>
    <ligand>
        <name>Mg(2+)</name>
        <dbReference type="ChEBI" id="CHEBI:18420"/>
        <label>2</label>
    </ligand>
</feature>
<feature type="binding site" evidence="1">
    <location>
        <position position="393"/>
    </location>
    <ligand>
        <name>Mg(2+)</name>
        <dbReference type="ChEBI" id="CHEBI:18420"/>
        <label>2</label>
    </ligand>
</feature>
<feature type="binding site" evidence="1">
    <location>
        <position position="414"/>
    </location>
    <ligand>
        <name>substrate</name>
    </ligand>
</feature>
<name>ILVC_PASMU</name>
<accession>Q9CLF1</accession>
<gene>
    <name evidence="1" type="primary">ilvC</name>
    <name type="ordered locus">PM1284</name>
</gene>
<proteinExistence type="inferred from homology"/>
<keyword id="KW-0028">Amino-acid biosynthesis</keyword>
<keyword id="KW-0100">Branched-chain amino acid biosynthesis</keyword>
<keyword id="KW-0460">Magnesium</keyword>
<keyword id="KW-0479">Metal-binding</keyword>
<keyword id="KW-0521">NADP</keyword>
<keyword id="KW-0560">Oxidoreductase</keyword>
<keyword id="KW-1185">Reference proteome</keyword>
<keyword id="KW-0677">Repeat</keyword>
<dbReference type="EC" id="1.1.1.86" evidence="1"/>
<dbReference type="EMBL" id="AE004439">
    <property type="protein sequence ID" value="AAK03368.1"/>
    <property type="molecule type" value="Genomic_DNA"/>
</dbReference>
<dbReference type="RefSeq" id="WP_005757467.1">
    <property type="nucleotide sequence ID" value="NC_002663.1"/>
</dbReference>
<dbReference type="SMR" id="Q9CLF1"/>
<dbReference type="STRING" id="272843.PM1284"/>
<dbReference type="EnsemblBacteria" id="AAK03368">
    <property type="protein sequence ID" value="AAK03368"/>
    <property type="gene ID" value="PM1284"/>
</dbReference>
<dbReference type="GeneID" id="77206762"/>
<dbReference type="KEGG" id="pmu:PM1284"/>
<dbReference type="PATRIC" id="fig|272843.6.peg.1295"/>
<dbReference type="HOGENOM" id="CLU_551905_0_0_6"/>
<dbReference type="OrthoDB" id="9804088at2"/>
<dbReference type="UniPathway" id="UPA00047">
    <property type="reaction ID" value="UER00056"/>
</dbReference>
<dbReference type="UniPathway" id="UPA00049">
    <property type="reaction ID" value="UER00060"/>
</dbReference>
<dbReference type="Proteomes" id="UP000000809">
    <property type="component" value="Chromosome"/>
</dbReference>
<dbReference type="GO" id="GO:0005829">
    <property type="term" value="C:cytosol"/>
    <property type="evidence" value="ECO:0007669"/>
    <property type="project" value="TreeGrafter"/>
</dbReference>
<dbReference type="GO" id="GO:0004455">
    <property type="term" value="F:ketol-acid reductoisomerase activity"/>
    <property type="evidence" value="ECO:0007669"/>
    <property type="project" value="UniProtKB-UniRule"/>
</dbReference>
<dbReference type="GO" id="GO:0000287">
    <property type="term" value="F:magnesium ion binding"/>
    <property type="evidence" value="ECO:0007669"/>
    <property type="project" value="UniProtKB-UniRule"/>
</dbReference>
<dbReference type="GO" id="GO:0009097">
    <property type="term" value="P:isoleucine biosynthetic process"/>
    <property type="evidence" value="ECO:0007669"/>
    <property type="project" value="UniProtKB-UniRule"/>
</dbReference>
<dbReference type="GO" id="GO:0009099">
    <property type="term" value="P:L-valine biosynthetic process"/>
    <property type="evidence" value="ECO:0007669"/>
    <property type="project" value="UniProtKB-UniRule"/>
</dbReference>
<dbReference type="FunFam" id="1.10.1040.10:FF:000007">
    <property type="entry name" value="Ketol-acid reductoisomerase (NADP(+))"/>
    <property type="match status" value="1"/>
</dbReference>
<dbReference type="FunFam" id="3.40.50.720:FF:000043">
    <property type="entry name" value="Ketol-acid reductoisomerase (NADP(+))"/>
    <property type="match status" value="1"/>
</dbReference>
<dbReference type="Gene3D" id="1.10.1040.10">
    <property type="entry name" value="N-(1-d-carboxylethyl)-l-norvaline Dehydrogenase, domain 2"/>
    <property type="match status" value="1"/>
</dbReference>
<dbReference type="Gene3D" id="3.40.50.720">
    <property type="entry name" value="NAD(P)-binding Rossmann-like Domain"/>
    <property type="match status" value="1"/>
</dbReference>
<dbReference type="HAMAP" id="MF_00435">
    <property type="entry name" value="IlvC"/>
    <property type="match status" value="1"/>
</dbReference>
<dbReference type="InterPro" id="IPR008927">
    <property type="entry name" value="6-PGluconate_DH-like_C_sf"/>
</dbReference>
<dbReference type="InterPro" id="IPR013328">
    <property type="entry name" value="6PGD_dom2"/>
</dbReference>
<dbReference type="InterPro" id="IPR013023">
    <property type="entry name" value="KARI"/>
</dbReference>
<dbReference type="InterPro" id="IPR000506">
    <property type="entry name" value="KARI_C"/>
</dbReference>
<dbReference type="InterPro" id="IPR013116">
    <property type="entry name" value="KARI_N"/>
</dbReference>
<dbReference type="InterPro" id="IPR036291">
    <property type="entry name" value="NAD(P)-bd_dom_sf"/>
</dbReference>
<dbReference type="NCBIfam" id="TIGR00465">
    <property type="entry name" value="ilvC"/>
    <property type="match status" value="1"/>
</dbReference>
<dbReference type="NCBIfam" id="NF003557">
    <property type="entry name" value="PRK05225.1"/>
    <property type="match status" value="1"/>
</dbReference>
<dbReference type="PANTHER" id="PTHR21371">
    <property type="entry name" value="KETOL-ACID REDUCTOISOMERASE, MITOCHONDRIAL"/>
    <property type="match status" value="1"/>
</dbReference>
<dbReference type="PANTHER" id="PTHR21371:SF1">
    <property type="entry name" value="KETOL-ACID REDUCTOISOMERASE, MITOCHONDRIAL"/>
    <property type="match status" value="1"/>
</dbReference>
<dbReference type="Pfam" id="PF01450">
    <property type="entry name" value="KARI_C"/>
    <property type="match status" value="2"/>
</dbReference>
<dbReference type="Pfam" id="PF07991">
    <property type="entry name" value="KARI_N"/>
    <property type="match status" value="1"/>
</dbReference>
<dbReference type="SUPFAM" id="SSF48179">
    <property type="entry name" value="6-phosphogluconate dehydrogenase C-terminal domain-like"/>
    <property type="match status" value="2"/>
</dbReference>
<dbReference type="SUPFAM" id="SSF51735">
    <property type="entry name" value="NAD(P)-binding Rossmann-fold domains"/>
    <property type="match status" value="1"/>
</dbReference>
<dbReference type="PROSITE" id="PS51851">
    <property type="entry name" value="KARI_C"/>
    <property type="match status" value="2"/>
</dbReference>
<dbReference type="PROSITE" id="PS51850">
    <property type="entry name" value="KARI_N"/>
    <property type="match status" value="1"/>
</dbReference>
<comment type="function">
    <text evidence="1">Involved in the biosynthesis of branched-chain amino acids (BCAA). Catalyzes an alkyl-migration followed by a ketol-acid reduction of (S)-2-acetolactate (S2AL) to yield (R)-2,3-dihydroxy-isovalerate. In the isomerase reaction, S2AL is rearranged via a Mg-dependent methyl migration to produce 3-hydroxy-3-methyl-2-ketobutyrate (HMKB). In the reductase reaction, this 2-ketoacid undergoes a metal-dependent reduction by NADPH to yield (R)-2,3-dihydroxy-isovalerate.</text>
</comment>
<comment type="catalytic activity">
    <reaction evidence="1">
        <text>(2R)-2,3-dihydroxy-3-methylbutanoate + NADP(+) = (2S)-2-acetolactate + NADPH + H(+)</text>
        <dbReference type="Rhea" id="RHEA:22068"/>
        <dbReference type="ChEBI" id="CHEBI:15378"/>
        <dbReference type="ChEBI" id="CHEBI:49072"/>
        <dbReference type="ChEBI" id="CHEBI:57783"/>
        <dbReference type="ChEBI" id="CHEBI:58349"/>
        <dbReference type="ChEBI" id="CHEBI:58476"/>
        <dbReference type="EC" id="1.1.1.86"/>
    </reaction>
</comment>
<comment type="catalytic activity">
    <reaction evidence="1">
        <text>(2R,3R)-2,3-dihydroxy-3-methylpentanoate + NADP(+) = (S)-2-ethyl-2-hydroxy-3-oxobutanoate + NADPH + H(+)</text>
        <dbReference type="Rhea" id="RHEA:13493"/>
        <dbReference type="ChEBI" id="CHEBI:15378"/>
        <dbReference type="ChEBI" id="CHEBI:49256"/>
        <dbReference type="ChEBI" id="CHEBI:49258"/>
        <dbReference type="ChEBI" id="CHEBI:57783"/>
        <dbReference type="ChEBI" id="CHEBI:58349"/>
        <dbReference type="EC" id="1.1.1.86"/>
    </reaction>
</comment>
<comment type="cofactor">
    <cofactor evidence="1">
        <name>Mg(2+)</name>
        <dbReference type="ChEBI" id="CHEBI:18420"/>
    </cofactor>
    <text evidence="1">Binds 2 magnesium ions per subunit.</text>
</comment>
<comment type="pathway">
    <text evidence="1">Amino-acid biosynthesis; L-isoleucine biosynthesis; L-isoleucine from 2-oxobutanoate: step 2/4.</text>
</comment>
<comment type="pathway">
    <text evidence="1">Amino-acid biosynthesis; L-valine biosynthesis; L-valine from pyruvate: step 2/4.</text>
</comment>
<comment type="similarity">
    <text evidence="1">Belongs to the ketol-acid reductoisomerase family.</text>
</comment>
<reference key="1">
    <citation type="journal article" date="2001" name="Proc. Natl. Acad. Sci. U.S.A.">
        <title>Complete genomic sequence of Pasteurella multocida Pm70.</title>
        <authorList>
            <person name="May B.J."/>
            <person name="Zhang Q."/>
            <person name="Li L.L."/>
            <person name="Paustian M.L."/>
            <person name="Whittam T.S."/>
            <person name="Kapur V."/>
        </authorList>
    </citation>
    <scope>NUCLEOTIDE SEQUENCE [LARGE SCALE GENOMIC DNA]</scope>
    <source>
        <strain>Pm70</strain>
    </source>
</reference>
<organism>
    <name type="scientific">Pasteurella multocida (strain Pm70)</name>
    <dbReference type="NCBI Taxonomy" id="272843"/>
    <lineage>
        <taxon>Bacteria</taxon>
        <taxon>Pseudomonadati</taxon>
        <taxon>Pseudomonadota</taxon>
        <taxon>Gammaproteobacteria</taxon>
        <taxon>Pasteurellales</taxon>
        <taxon>Pasteurellaceae</taxon>
        <taxon>Pasteurella</taxon>
    </lineage>
</organism>
<sequence length="491" mass="54204">MANYFNTLNLRQQLDQLGRCRFMDRNEFANEADYLKGKKIVIVGCGAQGLNQGLNMRDSGLDISYALRAEAIAEKRASFQRATENGFKVGTYDELIPSADLVVNLTPDKQHSKVVADVMPLMKQGAALGYSHGLNIVEVGEQIRKDITVVMVAPKCPGTEVREEYKRGFGVPTLIAVHPENDPNGDGLEIAKAWAAATGGHRAGVLESSFVAEVKSDLMGEQTILCGMLQAGSIVCYDKLVADGKDPAYAGKLIQYGWETITEALKQGGITLMMDRLSNSAKLRAFELSEQIKAKLTFLFEKHMDDIISGEFSATMMADWANGDANLLKWREETGKTAFENAPKYEGKISEQEYFDHGVLMVAMVKAGVELAFDTMVASGIYEESAYYESLHELPLIANTIARKRLYEMNVVISDTAEYGNYLFANVATPILAKEIMPTLQKGDLGEPTPTVEIDNITLRDVNDAIRNHPIELIGQELRGYMTDMKRISSH</sequence>